<proteinExistence type="evidence at protein level"/>
<dbReference type="GO" id="GO:0005576">
    <property type="term" value="C:extracellular region"/>
    <property type="evidence" value="ECO:0007005"/>
    <property type="project" value="UniProtKB"/>
</dbReference>
<dbReference type="GO" id="GO:0090729">
    <property type="term" value="F:toxin activity"/>
    <property type="evidence" value="ECO:0007669"/>
    <property type="project" value="UniProtKB-KW"/>
</dbReference>
<evidence type="ECO:0000269" key="1">
    <source>
    </source>
</evidence>
<evidence type="ECO:0000303" key="2">
    <source>
    </source>
</evidence>
<evidence type="ECO:0000305" key="3"/>
<protein>
    <recommendedName>
        <fullName>Toxin To37</fullName>
    </recommendedName>
    <alternativeName>
        <fullName>Toxin Tc37</fullName>
    </alternativeName>
</protein>
<sequence length="10" mass="1159">TAIRKCNPRT</sequence>
<keyword id="KW-0903">Direct protein sequencing</keyword>
<keyword id="KW-0964">Secreted</keyword>
<keyword id="KW-0800">Toxin</keyword>
<accession>P84681</accession>
<comment type="subcellular location">
    <subcellularLocation>
        <location evidence="1">Secreted</location>
    </subcellularLocation>
</comment>
<comment type="tissue specificity">
    <text evidence="1">Expressed by the venom gland.</text>
</comment>
<comment type="mass spectrometry" mass="7265.6" method="Electrospray" evidence="1"/>
<name>SC37_TITOB</name>
<reference evidence="3" key="1">
    <citation type="journal article" date="2004" name="J. Chromatogr. B">
        <title>Proteomics of the venom from the Amazonian scorpion Tityus cambridgei and the role of prolines on mass spectrometry analysis of toxins.</title>
        <authorList>
            <person name="Batista C.V.F."/>
            <person name="del Pozo L."/>
            <person name="Zamudio F.Z."/>
            <person name="Contreras S."/>
            <person name="Becerril B."/>
            <person name="Wanke E."/>
            <person name="Possani L.D."/>
        </authorList>
    </citation>
    <scope>PROTEIN SEQUENCE</scope>
    <scope>SUBCELLULAR LOCATION</scope>
    <scope>TISSUE SPECIFICITY</scope>
    <scope>MASS SPECTROMETRY</scope>
    <source>
        <tissue evidence="1">Venom</tissue>
    </source>
</reference>
<feature type="chain" id="PRO_0000066803" description="Toxin To37">
    <location>
        <begin position="1"/>
        <end position="10" status="greater than"/>
    </location>
</feature>
<feature type="non-terminal residue" evidence="2">
    <location>
        <position position="10"/>
    </location>
</feature>
<organism>
    <name type="scientific">Tityus obscurus</name>
    <name type="common">Amazonian scorpion</name>
    <name type="synonym">Tityus cambridgei</name>
    <dbReference type="NCBI Taxonomy" id="1221240"/>
    <lineage>
        <taxon>Eukaryota</taxon>
        <taxon>Metazoa</taxon>
        <taxon>Ecdysozoa</taxon>
        <taxon>Arthropoda</taxon>
        <taxon>Chelicerata</taxon>
        <taxon>Arachnida</taxon>
        <taxon>Scorpiones</taxon>
        <taxon>Buthida</taxon>
        <taxon>Buthoidea</taxon>
        <taxon>Buthidae</taxon>
        <taxon>Tityus</taxon>
    </lineage>
</organism>